<feature type="chain" id="PRO_1000165590" description="Anaerobic nitric oxide reductase transcription regulator NorR">
    <location>
        <begin position="1"/>
        <end position="506"/>
    </location>
</feature>
<feature type="domain" description="Sigma-54 factor interaction" evidence="1">
    <location>
        <begin position="187"/>
        <end position="416"/>
    </location>
</feature>
<feature type="DNA-binding region" description="H-T-H motif" evidence="1">
    <location>
        <begin position="481"/>
        <end position="500"/>
    </location>
</feature>
<feature type="binding site" evidence="1">
    <location>
        <begin position="215"/>
        <end position="222"/>
    </location>
    <ligand>
        <name>ATP</name>
        <dbReference type="ChEBI" id="CHEBI:30616"/>
    </ligand>
</feature>
<feature type="binding site" evidence="1">
    <location>
        <begin position="278"/>
        <end position="287"/>
    </location>
    <ligand>
        <name>ATP</name>
        <dbReference type="ChEBI" id="CHEBI:30616"/>
    </ligand>
</feature>
<feature type="modified residue" description="4-aspartylphosphate" evidence="1">
    <location>
        <position position="57"/>
    </location>
</feature>
<gene>
    <name evidence="1" type="primary">norR</name>
    <name type="ordered locus">SPC_2880</name>
</gene>
<comment type="function">
    <text evidence="1">Required for the expression of anaerobic nitric oxide (NO) reductase, acts as a transcriptional activator for at least the norVW operon. Activation also requires sigma-54.</text>
</comment>
<comment type="pathway">
    <text evidence="1">Nitrogen metabolism; nitric oxide reduction.</text>
</comment>
<protein>
    <recommendedName>
        <fullName evidence="1">Anaerobic nitric oxide reductase transcription regulator NorR</fullName>
    </recommendedName>
</protein>
<proteinExistence type="inferred from homology"/>
<dbReference type="EMBL" id="CP000857">
    <property type="protein sequence ID" value="ACN46974.1"/>
    <property type="molecule type" value="Genomic_DNA"/>
</dbReference>
<dbReference type="RefSeq" id="WP_000010820.1">
    <property type="nucleotide sequence ID" value="NC_012125.1"/>
</dbReference>
<dbReference type="SMR" id="C0PWN2"/>
<dbReference type="KEGG" id="sei:SPC_2880"/>
<dbReference type="HOGENOM" id="CLU_000445_125_2_6"/>
<dbReference type="UniPathway" id="UPA00638"/>
<dbReference type="Proteomes" id="UP000001599">
    <property type="component" value="Chromosome"/>
</dbReference>
<dbReference type="GO" id="GO:0005524">
    <property type="term" value="F:ATP binding"/>
    <property type="evidence" value="ECO:0007669"/>
    <property type="project" value="UniProtKB-UniRule"/>
</dbReference>
<dbReference type="GO" id="GO:0016887">
    <property type="term" value="F:ATP hydrolysis activity"/>
    <property type="evidence" value="ECO:0007669"/>
    <property type="project" value="InterPro"/>
</dbReference>
<dbReference type="GO" id="GO:0003677">
    <property type="term" value="F:DNA binding"/>
    <property type="evidence" value="ECO:0007669"/>
    <property type="project" value="UniProtKB-KW"/>
</dbReference>
<dbReference type="GO" id="GO:0003700">
    <property type="term" value="F:DNA-binding transcription factor activity"/>
    <property type="evidence" value="ECO:0007669"/>
    <property type="project" value="UniProtKB-UniRule"/>
</dbReference>
<dbReference type="GO" id="GO:0000160">
    <property type="term" value="P:phosphorelay signal transduction system"/>
    <property type="evidence" value="ECO:0007669"/>
    <property type="project" value="UniProtKB-UniRule"/>
</dbReference>
<dbReference type="CDD" id="cd00009">
    <property type="entry name" value="AAA"/>
    <property type="match status" value="1"/>
</dbReference>
<dbReference type="FunFam" id="1.10.8.60:FF:000045">
    <property type="entry name" value="Anaerobic nitric oxide reductase transcription regulator NorR"/>
    <property type="match status" value="1"/>
</dbReference>
<dbReference type="FunFam" id="3.30.450.40:FF:000021">
    <property type="entry name" value="Anaerobic nitric oxide reductase transcription regulator NorR"/>
    <property type="match status" value="1"/>
</dbReference>
<dbReference type="FunFam" id="3.40.50.300:FF:000006">
    <property type="entry name" value="DNA-binding transcriptional regulator NtrC"/>
    <property type="match status" value="1"/>
</dbReference>
<dbReference type="Gene3D" id="1.10.8.60">
    <property type="match status" value="1"/>
</dbReference>
<dbReference type="Gene3D" id="3.30.450.40">
    <property type="match status" value="1"/>
</dbReference>
<dbReference type="Gene3D" id="1.10.10.60">
    <property type="entry name" value="Homeodomain-like"/>
    <property type="match status" value="1"/>
</dbReference>
<dbReference type="Gene3D" id="3.40.50.300">
    <property type="entry name" value="P-loop containing nucleotide triphosphate hydrolases"/>
    <property type="match status" value="1"/>
</dbReference>
<dbReference type="HAMAP" id="MF_01314">
    <property type="entry name" value="NorR"/>
    <property type="match status" value="1"/>
</dbReference>
<dbReference type="InterPro" id="IPR003593">
    <property type="entry name" value="AAA+_ATPase"/>
</dbReference>
<dbReference type="InterPro" id="IPR003018">
    <property type="entry name" value="GAF"/>
</dbReference>
<dbReference type="InterPro" id="IPR029016">
    <property type="entry name" value="GAF-like_dom_sf"/>
</dbReference>
<dbReference type="InterPro" id="IPR009057">
    <property type="entry name" value="Homeodomain-like_sf"/>
</dbReference>
<dbReference type="InterPro" id="IPR023944">
    <property type="entry name" value="NorR"/>
</dbReference>
<dbReference type="InterPro" id="IPR027417">
    <property type="entry name" value="P-loop_NTPase"/>
</dbReference>
<dbReference type="InterPro" id="IPR002078">
    <property type="entry name" value="Sigma_54_int"/>
</dbReference>
<dbReference type="InterPro" id="IPR025662">
    <property type="entry name" value="Sigma_54_int_dom_ATP-bd_1"/>
</dbReference>
<dbReference type="InterPro" id="IPR025943">
    <property type="entry name" value="Sigma_54_int_dom_ATP-bd_2"/>
</dbReference>
<dbReference type="InterPro" id="IPR025944">
    <property type="entry name" value="Sigma_54_int_dom_CS"/>
</dbReference>
<dbReference type="NCBIfam" id="NF003451">
    <property type="entry name" value="PRK05022.1"/>
    <property type="match status" value="1"/>
</dbReference>
<dbReference type="PANTHER" id="PTHR32071:SF35">
    <property type="entry name" value="ANAEROBIC NITRIC OXIDE REDUCTASE TRANSCRIPTION REGULATOR NORR"/>
    <property type="match status" value="1"/>
</dbReference>
<dbReference type="PANTHER" id="PTHR32071">
    <property type="entry name" value="TRANSCRIPTIONAL REGULATORY PROTEIN"/>
    <property type="match status" value="1"/>
</dbReference>
<dbReference type="Pfam" id="PF01590">
    <property type="entry name" value="GAF"/>
    <property type="match status" value="1"/>
</dbReference>
<dbReference type="Pfam" id="PF00158">
    <property type="entry name" value="Sigma54_activat"/>
    <property type="match status" value="1"/>
</dbReference>
<dbReference type="SMART" id="SM00382">
    <property type="entry name" value="AAA"/>
    <property type="match status" value="1"/>
</dbReference>
<dbReference type="SMART" id="SM00065">
    <property type="entry name" value="GAF"/>
    <property type="match status" value="1"/>
</dbReference>
<dbReference type="SUPFAM" id="SSF55781">
    <property type="entry name" value="GAF domain-like"/>
    <property type="match status" value="1"/>
</dbReference>
<dbReference type="SUPFAM" id="SSF46689">
    <property type="entry name" value="Homeodomain-like"/>
    <property type="match status" value="1"/>
</dbReference>
<dbReference type="SUPFAM" id="SSF52540">
    <property type="entry name" value="P-loop containing nucleoside triphosphate hydrolases"/>
    <property type="match status" value="1"/>
</dbReference>
<dbReference type="PROSITE" id="PS00675">
    <property type="entry name" value="SIGMA54_INTERACT_1"/>
    <property type="match status" value="1"/>
</dbReference>
<dbReference type="PROSITE" id="PS00676">
    <property type="entry name" value="SIGMA54_INTERACT_2"/>
    <property type="match status" value="1"/>
</dbReference>
<dbReference type="PROSITE" id="PS00688">
    <property type="entry name" value="SIGMA54_INTERACT_3"/>
    <property type="match status" value="1"/>
</dbReference>
<dbReference type="PROSITE" id="PS50045">
    <property type="entry name" value="SIGMA54_INTERACT_4"/>
    <property type="match status" value="1"/>
</dbReference>
<name>NORR_SALPC</name>
<sequence>MSFSVEVLAGIAIELQRGIGHQDRFQRLITTLRQVLACDASALLRYESRQFIPLAIDGLAQDVLGRRFTLEGHPRLEAIARAGDVVRFPADSDLPDPYDGLIPGQESLKVHACVGLPLFAGQNLIGALTLDAMTPEQFEVFSDEELRLVAALAAGALSNALLIEQLESQNMLPGSSGVFEPIKETHMIGLSPAMTQLKKEIEIVAGSDLNVLIGGETGTGKELVAKAIHQSSPRAVNPLVYLNCAALPESVAESELFGHVKGAFTGAISNRSGKFEMADNGTLFLDEIGELSLALQAKLLRVLQYGDIQRVGDDRSLRVDVRVLAATNRDLREEVLAGRFRADLFYRLSVFPLFVPPLRERGDDVVLLAGYFCEQCRLRLGLSRVVLSPGARRHLLNYGWPGNVRELEHAIHRAVVLARATRAGDEVVLEEQHFALSEDVLPAPSAESFLALPACRNLRESTENFQREMIRQALAQNNHNWAASARALETDVANLHRLAKRLGLKD</sequence>
<evidence type="ECO:0000255" key="1">
    <source>
        <dbReference type="HAMAP-Rule" id="MF_01314"/>
    </source>
</evidence>
<organism>
    <name type="scientific">Salmonella paratyphi C (strain RKS4594)</name>
    <dbReference type="NCBI Taxonomy" id="476213"/>
    <lineage>
        <taxon>Bacteria</taxon>
        <taxon>Pseudomonadati</taxon>
        <taxon>Pseudomonadota</taxon>
        <taxon>Gammaproteobacteria</taxon>
        <taxon>Enterobacterales</taxon>
        <taxon>Enterobacteriaceae</taxon>
        <taxon>Salmonella</taxon>
    </lineage>
</organism>
<keyword id="KW-0067">ATP-binding</keyword>
<keyword id="KW-0238">DNA-binding</keyword>
<keyword id="KW-0547">Nucleotide-binding</keyword>
<keyword id="KW-0597">Phosphoprotein</keyword>
<keyword id="KW-0804">Transcription</keyword>
<keyword id="KW-0805">Transcription regulation</keyword>
<reference key="1">
    <citation type="journal article" date="2009" name="PLoS ONE">
        <title>Salmonella paratyphi C: genetic divergence from Salmonella choleraesuis and pathogenic convergence with Salmonella typhi.</title>
        <authorList>
            <person name="Liu W.-Q."/>
            <person name="Feng Y."/>
            <person name="Wang Y."/>
            <person name="Zou Q.-H."/>
            <person name="Chen F."/>
            <person name="Guo J.-T."/>
            <person name="Peng Y.-H."/>
            <person name="Jin Y."/>
            <person name="Li Y.-G."/>
            <person name="Hu S.-N."/>
            <person name="Johnston R.N."/>
            <person name="Liu G.-R."/>
            <person name="Liu S.-L."/>
        </authorList>
    </citation>
    <scope>NUCLEOTIDE SEQUENCE [LARGE SCALE GENOMIC DNA]</scope>
    <source>
        <strain>RKS4594</strain>
    </source>
</reference>
<accession>C0PWN2</accession>